<dbReference type="EC" id="4.1.99.17" evidence="1"/>
<dbReference type="EMBL" id="BX640411">
    <property type="protein sequence ID" value="CAE40586.1"/>
    <property type="molecule type" value="Genomic_DNA"/>
</dbReference>
<dbReference type="RefSeq" id="NP_879094.1">
    <property type="nucleotide sequence ID" value="NC_002929.2"/>
</dbReference>
<dbReference type="RefSeq" id="WP_010929683.1">
    <property type="nucleotide sequence ID" value="NZ_CP039022.1"/>
</dbReference>
<dbReference type="SMR" id="Q7W0D7"/>
<dbReference type="STRING" id="257313.BP0206"/>
<dbReference type="PaxDb" id="257313-BP0206"/>
<dbReference type="GeneID" id="69603520"/>
<dbReference type="KEGG" id="bpe:BP0206"/>
<dbReference type="PATRIC" id="fig|257313.5.peg.220"/>
<dbReference type="eggNOG" id="COG0422">
    <property type="taxonomic scope" value="Bacteria"/>
</dbReference>
<dbReference type="HOGENOM" id="CLU_013181_2_1_4"/>
<dbReference type="UniPathway" id="UPA00060"/>
<dbReference type="Proteomes" id="UP000002676">
    <property type="component" value="Chromosome"/>
</dbReference>
<dbReference type="GO" id="GO:0005829">
    <property type="term" value="C:cytosol"/>
    <property type="evidence" value="ECO:0007669"/>
    <property type="project" value="TreeGrafter"/>
</dbReference>
<dbReference type="GO" id="GO:0051539">
    <property type="term" value="F:4 iron, 4 sulfur cluster binding"/>
    <property type="evidence" value="ECO:0007669"/>
    <property type="project" value="UniProtKB-KW"/>
</dbReference>
<dbReference type="GO" id="GO:0016830">
    <property type="term" value="F:carbon-carbon lyase activity"/>
    <property type="evidence" value="ECO:0007669"/>
    <property type="project" value="InterPro"/>
</dbReference>
<dbReference type="GO" id="GO:0008270">
    <property type="term" value="F:zinc ion binding"/>
    <property type="evidence" value="ECO:0007669"/>
    <property type="project" value="UniProtKB-UniRule"/>
</dbReference>
<dbReference type="GO" id="GO:0009228">
    <property type="term" value="P:thiamine biosynthetic process"/>
    <property type="evidence" value="ECO:0007669"/>
    <property type="project" value="UniProtKB-KW"/>
</dbReference>
<dbReference type="GO" id="GO:0009229">
    <property type="term" value="P:thiamine diphosphate biosynthetic process"/>
    <property type="evidence" value="ECO:0007669"/>
    <property type="project" value="UniProtKB-UniRule"/>
</dbReference>
<dbReference type="FunFam" id="3.20.20.540:FF:000001">
    <property type="entry name" value="Phosphomethylpyrimidine synthase"/>
    <property type="match status" value="1"/>
</dbReference>
<dbReference type="Gene3D" id="6.10.250.620">
    <property type="match status" value="1"/>
</dbReference>
<dbReference type="Gene3D" id="3.20.20.540">
    <property type="entry name" value="Radical SAM ThiC family, central domain"/>
    <property type="match status" value="1"/>
</dbReference>
<dbReference type="HAMAP" id="MF_00089">
    <property type="entry name" value="ThiC"/>
    <property type="match status" value="1"/>
</dbReference>
<dbReference type="InterPro" id="IPR037509">
    <property type="entry name" value="ThiC"/>
</dbReference>
<dbReference type="InterPro" id="IPR025747">
    <property type="entry name" value="ThiC-associated_dom"/>
</dbReference>
<dbReference type="InterPro" id="IPR038521">
    <property type="entry name" value="ThiC/Bza_core_dom"/>
</dbReference>
<dbReference type="InterPro" id="IPR002817">
    <property type="entry name" value="ThiC/BzaA/B"/>
</dbReference>
<dbReference type="NCBIfam" id="NF006763">
    <property type="entry name" value="PRK09284.1"/>
    <property type="match status" value="1"/>
</dbReference>
<dbReference type="NCBIfam" id="NF009895">
    <property type="entry name" value="PRK13352.1"/>
    <property type="match status" value="1"/>
</dbReference>
<dbReference type="NCBIfam" id="TIGR00190">
    <property type="entry name" value="thiC"/>
    <property type="match status" value="1"/>
</dbReference>
<dbReference type="PANTHER" id="PTHR30557:SF1">
    <property type="entry name" value="PHOSPHOMETHYLPYRIMIDINE SYNTHASE, CHLOROPLASTIC"/>
    <property type="match status" value="1"/>
</dbReference>
<dbReference type="PANTHER" id="PTHR30557">
    <property type="entry name" value="THIAMINE BIOSYNTHESIS PROTEIN THIC"/>
    <property type="match status" value="1"/>
</dbReference>
<dbReference type="Pfam" id="PF13667">
    <property type="entry name" value="ThiC-associated"/>
    <property type="match status" value="1"/>
</dbReference>
<dbReference type="Pfam" id="PF01964">
    <property type="entry name" value="ThiC_Rad_SAM"/>
    <property type="match status" value="1"/>
</dbReference>
<dbReference type="SFLD" id="SFLDF00407">
    <property type="entry name" value="phosphomethylpyrimidine_syntha"/>
    <property type="match status" value="1"/>
</dbReference>
<dbReference type="SFLD" id="SFLDG01114">
    <property type="entry name" value="phosphomethylpyrimidine_syntha"/>
    <property type="match status" value="1"/>
</dbReference>
<dbReference type="SFLD" id="SFLDS00113">
    <property type="entry name" value="Radical_SAM_Phosphomethylpyrim"/>
    <property type="match status" value="1"/>
</dbReference>
<accession>Q7W0D7</accession>
<protein>
    <recommendedName>
        <fullName evidence="1">Phosphomethylpyrimidine synthase</fullName>
        <ecNumber evidence="1">4.1.99.17</ecNumber>
    </recommendedName>
    <alternativeName>
        <fullName evidence="1">Hydroxymethylpyrimidine phosphate synthase</fullName>
        <shortName evidence="1">HMP-P synthase</shortName>
        <shortName evidence="1">HMP-phosphate synthase</shortName>
        <shortName evidence="1">HMPP synthase</shortName>
    </alternativeName>
    <alternativeName>
        <fullName evidence="1">Thiamine biosynthesis protein ThiC</fullName>
    </alternativeName>
</protein>
<keyword id="KW-0004">4Fe-4S</keyword>
<keyword id="KW-0408">Iron</keyword>
<keyword id="KW-0411">Iron-sulfur</keyword>
<keyword id="KW-0456">Lyase</keyword>
<keyword id="KW-0479">Metal-binding</keyword>
<keyword id="KW-1185">Reference proteome</keyword>
<keyword id="KW-0949">S-adenosyl-L-methionine</keyword>
<keyword id="KW-0784">Thiamine biosynthesis</keyword>
<keyword id="KW-0862">Zinc</keyword>
<reference key="1">
    <citation type="journal article" date="2003" name="Nat. Genet.">
        <title>Comparative analysis of the genome sequences of Bordetella pertussis, Bordetella parapertussis and Bordetella bronchiseptica.</title>
        <authorList>
            <person name="Parkhill J."/>
            <person name="Sebaihia M."/>
            <person name="Preston A."/>
            <person name="Murphy L.D."/>
            <person name="Thomson N.R."/>
            <person name="Harris D.E."/>
            <person name="Holden M.T.G."/>
            <person name="Churcher C.M."/>
            <person name="Bentley S.D."/>
            <person name="Mungall K.L."/>
            <person name="Cerdeno-Tarraga A.-M."/>
            <person name="Temple L."/>
            <person name="James K.D."/>
            <person name="Harris B."/>
            <person name="Quail M.A."/>
            <person name="Achtman M."/>
            <person name="Atkin R."/>
            <person name="Baker S."/>
            <person name="Basham D."/>
            <person name="Bason N."/>
            <person name="Cherevach I."/>
            <person name="Chillingworth T."/>
            <person name="Collins M."/>
            <person name="Cronin A."/>
            <person name="Davis P."/>
            <person name="Doggett J."/>
            <person name="Feltwell T."/>
            <person name="Goble A."/>
            <person name="Hamlin N."/>
            <person name="Hauser H."/>
            <person name="Holroyd S."/>
            <person name="Jagels K."/>
            <person name="Leather S."/>
            <person name="Moule S."/>
            <person name="Norberczak H."/>
            <person name="O'Neil S."/>
            <person name="Ormond D."/>
            <person name="Price C."/>
            <person name="Rabbinowitsch E."/>
            <person name="Rutter S."/>
            <person name="Sanders M."/>
            <person name="Saunders D."/>
            <person name="Seeger K."/>
            <person name="Sharp S."/>
            <person name="Simmonds M."/>
            <person name="Skelton J."/>
            <person name="Squares R."/>
            <person name="Squares S."/>
            <person name="Stevens K."/>
            <person name="Unwin L."/>
            <person name="Whitehead S."/>
            <person name="Barrell B.G."/>
            <person name="Maskell D.J."/>
        </authorList>
    </citation>
    <scope>NUCLEOTIDE SEQUENCE [LARGE SCALE GENOMIC DNA]</scope>
    <source>
        <strain>Tohama I / ATCC BAA-589 / NCTC 13251</strain>
    </source>
</reference>
<gene>
    <name evidence="1" type="primary">thiC</name>
    <name type="ordered locus">BP0206</name>
</gene>
<name>THIC_BORPE</name>
<sequence>MNANPTFLAATAEVDAAAVAPLPKSRKVYETGSRPDIRVPFREIEQADTPTMFGGEKNPPLTVYDTSGPYTDPQASIDIRRGLPALRRAWIEERGDTEVLDGPTSDYGKERLTDPKLTAMRFDLQRPPRRARAGANVTQMHYARRGIVTPEMEFIALRENLRREHYLETLRASGPDGEKLAKRLLRQHPGQSFGAALPSAITPEFVREEVARGRAIIPANINHPEIEPMIIGRNFLVKINANIGNSAVSSGIGEEVEKMTWAIRWGGDTVMDLSTGKHIHETREWIIRNSPVPIGTVPIYQALEKVDGKAEELTWEIFRDTLIEQAEQGVDYFTIHAGVRLPFIPMTADRMTGIVSRGGSIMAKWCLAHHKESFLYERFEEICEIMKAYDVSFSLGDGLRPGSGYDANDEAQFAELKTLGELTQVAWKHDVQVMIEGPGHVPMQMIKENMELQLKHCDEAPFYTLGPLTTDIAPGYDHITSGIGAALIGWYGTAMLCYVTPKEHLGLPNKKDVKDGIITYKIAAHAADLAKGHPGAAIRDNALSKARFEFRWDDQFNLGLDPDTAKEFHDETLPKDSMKVAHFCSMCGPHFCSMKITQDVRDYAAAQGVSEKDALQQGMQEKAVEFVKKGAEVYHRT</sequence>
<proteinExistence type="inferred from homology"/>
<evidence type="ECO:0000255" key="1">
    <source>
        <dbReference type="HAMAP-Rule" id="MF_00089"/>
    </source>
</evidence>
<organism>
    <name type="scientific">Bordetella pertussis (strain Tohama I / ATCC BAA-589 / NCTC 13251)</name>
    <dbReference type="NCBI Taxonomy" id="257313"/>
    <lineage>
        <taxon>Bacteria</taxon>
        <taxon>Pseudomonadati</taxon>
        <taxon>Pseudomonadota</taxon>
        <taxon>Betaproteobacteria</taxon>
        <taxon>Burkholderiales</taxon>
        <taxon>Alcaligenaceae</taxon>
        <taxon>Bordetella</taxon>
    </lineage>
</organism>
<feature type="chain" id="PRO_0000152789" description="Phosphomethylpyrimidine synthase">
    <location>
        <begin position="1"/>
        <end position="637"/>
    </location>
</feature>
<feature type="binding site" evidence="1">
    <location>
        <position position="242"/>
    </location>
    <ligand>
        <name>substrate</name>
    </ligand>
</feature>
<feature type="binding site" evidence="1">
    <location>
        <position position="271"/>
    </location>
    <ligand>
        <name>substrate</name>
    </ligand>
</feature>
<feature type="binding site" evidence="1">
    <location>
        <position position="300"/>
    </location>
    <ligand>
        <name>substrate</name>
    </ligand>
</feature>
<feature type="binding site" evidence="1">
    <location>
        <position position="336"/>
    </location>
    <ligand>
        <name>substrate</name>
    </ligand>
</feature>
<feature type="binding site" evidence="1">
    <location>
        <begin position="356"/>
        <end position="358"/>
    </location>
    <ligand>
        <name>substrate</name>
    </ligand>
</feature>
<feature type="binding site" evidence="1">
    <location>
        <begin position="397"/>
        <end position="400"/>
    </location>
    <ligand>
        <name>substrate</name>
    </ligand>
</feature>
<feature type="binding site" evidence="1">
    <location>
        <position position="436"/>
    </location>
    <ligand>
        <name>substrate</name>
    </ligand>
</feature>
<feature type="binding site" evidence="1">
    <location>
        <position position="440"/>
    </location>
    <ligand>
        <name>Zn(2+)</name>
        <dbReference type="ChEBI" id="CHEBI:29105"/>
    </ligand>
</feature>
<feature type="binding site" evidence="1">
    <location>
        <position position="463"/>
    </location>
    <ligand>
        <name>substrate</name>
    </ligand>
</feature>
<feature type="binding site" evidence="1">
    <location>
        <position position="504"/>
    </location>
    <ligand>
        <name>Zn(2+)</name>
        <dbReference type="ChEBI" id="CHEBI:29105"/>
    </ligand>
</feature>
<feature type="binding site" evidence="1">
    <location>
        <position position="584"/>
    </location>
    <ligand>
        <name>[4Fe-4S] cluster</name>
        <dbReference type="ChEBI" id="CHEBI:49883"/>
        <note>4Fe-4S-S-AdoMet</note>
    </ligand>
</feature>
<feature type="binding site" evidence="1">
    <location>
        <position position="587"/>
    </location>
    <ligand>
        <name>[4Fe-4S] cluster</name>
        <dbReference type="ChEBI" id="CHEBI:49883"/>
        <note>4Fe-4S-S-AdoMet</note>
    </ligand>
</feature>
<feature type="binding site" evidence="1">
    <location>
        <position position="592"/>
    </location>
    <ligand>
        <name>[4Fe-4S] cluster</name>
        <dbReference type="ChEBI" id="CHEBI:49883"/>
        <note>4Fe-4S-S-AdoMet</note>
    </ligand>
</feature>
<comment type="function">
    <text evidence="1">Catalyzes the synthesis of the hydroxymethylpyrimidine phosphate (HMP-P) moiety of thiamine from aminoimidazole ribotide (AIR) in a radical S-adenosyl-L-methionine (SAM)-dependent reaction.</text>
</comment>
<comment type="catalytic activity">
    <reaction evidence="1">
        <text>5-amino-1-(5-phospho-beta-D-ribosyl)imidazole + S-adenosyl-L-methionine = 4-amino-2-methyl-5-(phosphooxymethyl)pyrimidine + CO + 5'-deoxyadenosine + formate + L-methionine + 3 H(+)</text>
        <dbReference type="Rhea" id="RHEA:24840"/>
        <dbReference type="ChEBI" id="CHEBI:15378"/>
        <dbReference type="ChEBI" id="CHEBI:15740"/>
        <dbReference type="ChEBI" id="CHEBI:17245"/>
        <dbReference type="ChEBI" id="CHEBI:17319"/>
        <dbReference type="ChEBI" id="CHEBI:57844"/>
        <dbReference type="ChEBI" id="CHEBI:58354"/>
        <dbReference type="ChEBI" id="CHEBI:59789"/>
        <dbReference type="ChEBI" id="CHEBI:137981"/>
        <dbReference type="EC" id="4.1.99.17"/>
    </reaction>
</comment>
<comment type="cofactor">
    <cofactor evidence="1">
        <name>[4Fe-4S] cluster</name>
        <dbReference type="ChEBI" id="CHEBI:49883"/>
    </cofactor>
    <text evidence="1">Binds 1 [4Fe-4S] cluster per subunit. The cluster is coordinated with 3 cysteines and an exchangeable S-adenosyl-L-methionine.</text>
</comment>
<comment type="pathway">
    <text evidence="1">Cofactor biosynthesis; thiamine diphosphate biosynthesis.</text>
</comment>
<comment type="subunit">
    <text evidence="1">Homodimer.</text>
</comment>
<comment type="similarity">
    <text evidence="1">Belongs to the ThiC family.</text>
</comment>